<feature type="chain" id="PRO_0000166820" description="Peptide chain release factor 2">
    <location>
        <begin position="1"/>
        <end position="365"/>
    </location>
</feature>
<feature type="modified residue" description="N5-methylglutamine" evidence="1">
    <location>
        <position position="252"/>
    </location>
</feature>
<reference key="1">
    <citation type="journal article" date="1995" name="Science">
        <title>Whole-genome random sequencing and assembly of Haemophilus influenzae Rd.</title>
        <authorList>
            <person name="Fleischmann R.D."/>
            <person name="Adams M.D."/>
            <person name="White O."/>
            <person name="Clayton R.A."/>
            <person name="Kirkness E.F."/>
            <person name="Kerlavage A.R."/>
            <person name="Bult C.J."/>
            <person name="Tomb J.-F."/>
            <person name="Dougherty B.A."/>
            <person name="Merrick J.M."/>
            <person name="McKenney K."/>
            <person name="Sutton G.G."/>
            <person name="FitzHugh W."/>
            <person name="Fields C.A."/>
            <person name="Gocayne J.D."/>
            <person name="Scott J.D."/>
            <person name="Shirley R."/>
            <person name="Liu L.-I."/>
            <person name="Glodek A."/>
            <person name="Kelley J.M."/>
            <person name="Weidman J.F."/>
            <person name="Phillips C.A."/>
            <person name="Spriggs T."/>
            <person name="Hedblom E."/>
            <person name="Cotton M.D."/>
            <person name="Utterback T.R."/>
            <person name="Hanna M.C."/>
            <person name="Nguyen D.T."/>
            <person name="Saudek D.M."/>
            <person name="Brandon R.C."/>
            <person name="Fine L.D."/>
            <person name="Fritchman J.L."/>
            <person name="Fuhrmann J.L."/>
            <person name="Geoghagen N.S.M."/>
            <person name="Gnehm C.L."/>
            <person name="McDonald L.A."/>
            <person name="Small K.V."/>
            <person name="Fraser C.M."/>
            <person name="Smith H.O."/>
            <person name="Venter J.C."/>
        </authorList>
    </citation>
    <scope>NUCLEOTIDE SEQUENCE [LARGE SCALE GENOMIC DNA]</scope>
    <source>
        <strain>ATCC 51907 / DSM 11121 / KW20 / Rd</strain>
    </source>
</reference>
<sequence length="365" mass="41281">MFEINPVKNKIIDLSDRTSVLRGYLDFDAKVERLEEVNGELEQPDVWNDPDKAQALGKERVSLEQVVNTIKNLEQGLEDVDGLLELAIEAEDEDTFNEAVAELDELEQQLEKLEFRRMFSGEHDACDCYVDLQAGSGGTEAQDWTEMLLRMYLRWAESKGFKTELMEVSDGDVAGLKSATIKVSGEYAFGWLRTETGIHRLVRKSPFDSNNRRHTSFSAAFVYPEIDDDIDIEINPADLRIDVYRASGAGGQHVNKTESAVRITHMPSGIVVQCQNDRSQHKNKDQAMKQLKAKLYELELQKKNADKQAMEDNKSDIGWGSQIRSYVLDDSRIKDLRTGVENRNTQAVLDGDLDRFIEASLKAGL</sequence>
<evidence type="ECO:0000250" key="1"/>
<evidence type="ECO:0000305" key="2"/>
<organism>
    <name type="scientific">Haemophilus influenzae (strain ATCC 51907 / DSM 11121 / KW20 / Rd)</name>
    <dbReference type="NCBI Taxonomy" id="71421"/>
    <lineage>
        <taxon>Bacteria</taxon>
        <taxon>Pseudomonadati</taxon>
        <taxon>Pseudomonadota</taxon>
        <taxon>Gammaproteobacteria</taxon>
        <taxon>Pasteurellales</taxon>
        <taxon>Pasteurellaceae</taxon>
        <taxon>Haemophilus</taxon>
    </lineage>
</organism>
<keyword id="KW-0963">Cytoplasm</keyword>
<keyword id="KW-0488">Methylation</keyword>
<keyword id="KW-0648">Protein biosynthesis</keyword>
<keyword id="KW-1185">Reference proteome</keyword>
<keyword id="KW-0688">Ribosomal frameshifting</keyword>
<protein>
    <recommendedName>
        <fullName>Peptide chain release factor 2</fullName>
        <shortName>RF-2</shortName>
    </recommendedName>
</protein>
<accession>P43918</accession>
<proteinExistence type="inferred from homology"/>
<dbReference type="EMBL" id="L42023">
    <property type="status" value="NOT_ANNOTATED_CDS"/>
    <property type="molecule type" value="Genomic_DNA"/>
</dbReference>
<dbReference type="PIR" id="A64190">
    <property type="entry name" value="A64190"/>
</dbReference>
<dbReference type="SMR" id="P43918"/>
<dbReference type="PhylomeDB" id="P43918"/>
<dbReference type="Proteomes" id="UP000000579">
    <property type="component" value="Chromosome"/>
</dbReference>
<dbReference type="GO" id="GO:0005737">
    <property type="term" value="C:cytoplasm"/>
    <property type="evidence" value="ECO:0007669"/>
    <property type="project" value="UniProtKB-SubCell"/>
</dbReference>
<dbReference type="GO" id="GO:0016149">
    <property type="term" value="F:translation release factor activity, codon specific"/>
    <property type="evidence" value="ECO:0007669"/>
    <property type="project" value="UniProtKB-UniRule"/>
</dbReference>
<dbReference type="GO" id="GO:0075523">
    <property type="term" value="P:viral translational frameshifting"/>
    <property type="evidence" value="ECO:0007669"/>
    <property type="project" value="UniProtKB-KW"/>
</dbReference>
<dbReference type="FunFam" id="3.30.160.20:FF:000010">
    <property type="entry name" value="Peptide chain release factor 2"/>
    <property type="match status" value="1"/>
</dbReference>
<dbReference type="Gene3D" id="3.30.160.20">
    <property type="match status" value="1"/>
</dbReference>
<dbReference type="Gene3D" id="3.30.70.1660">
    <property type="match status" value="1"/>
</dbReference>
<dbReference type="Gene3D" id="1.20.58.410">
    <property type="entry name" value="Release factor"/>
    <property type="match status" value="1"/>
</dbReference>
<dbReference type="HAMAP" id="MF_00094">
    <property type="entry name" value="Rel_fac_2"/>
    <property type="match status" value="1"/>
</dbReference>
<dbReference type="InterPro" id="IPR005139">
    <property type="entry name" value="PCRF"/>
</dbReference>
<dbReference type="InterPro" id="IPR000352">
    <property type="entry name" value="Pep_chain_release_fac_I"/>
</dbReference>
<dbReference type="InterPro" id="IPR045853">
    <property type="entry name" value="Pep_chain_release_fac_I_sf"/>
</dbReference>
<dbReference type="InterPro" id="IPR004374">
    <property type="entry name" value="PrfB"/>
</dbReference>
<dbReference type="NCBIfam" id="TIGR00020">
    <property type="entry name" value="prfB"/>
    <property type="match status" value="1"/>
</dbReference>
<dbReference type="PANTHER" id="PTHR43116:SF3">
    <property type="entry name" value="CLASS I PEPTIDE CHAIN RELEASE FACTOR"/>
    <property type="match status" value="1"/>
</dbReference>
<dbReference type="PANTHER" id="PTHR43116">
    <property type="entry name" value="PEPTIDE CHAIN RELEASE FACTOR 2"/>
    <property type="match status" value="1"/>
</dbReference>
<dbReference type="Pfam" id="PF03462">
    <property type="entry name" value="PCRF"/>
    <property type="match status" value="1"/>
</dbReference>
<dbReference type="Pfam" id="PF00472">
    <property type="entry name" value="RF-1"/>
    <property type="match status" value="1"/>
</dbReference>
<dbReference type="SMART" id="SM00937">
    <property type="entry name" value="PCRF"/>
    <property type="match status" value="1"/>
</dbReference>
<dbReference type="SUPFAM" id="SSF75620">
    <property type="entry name" value="Release factor"/>
    <property type="match status" value="1"/>
</dbReference>
<dbReference type="PROSITE" id="PS00745">
    <property type="entry name" value="RF_PROK_I"/>
    <property type="match status" value="1"/>
</dbReference>
<name>RF2_HAEIN</name>
<comment type="function">
    <text evidence="1">Peptide chain release factor 2 directs the termination of translation in response to the peptide chain termination codons UGA and UAA.</text>
</comment>
<comment type="subcellular location">
    <subcellularLocation>
        <location evidence="1">Cytoplasm</location>
    </subcellularLocation>
</comment>
<comment type="PTM">
    <text evidence="1">Methylated by PrmC. Methylation increases the termination efficiency of RF2 (By similarity).</text>
</comment>
<comment type="miscellaneous">
    <text evidence="1">The gene for this protein contains a UGA in-frame termination codon after Leu-25; a naturally occurring frameshift enables complete translation of RF-2. This provides a mechanism for the protein to regulate its own production (By similarity).</text>
</comment>
<comment type="similarity">
    <text evidence="2">Belongs to the prokaryotic/mitochondrial release factor family.</text>
</comment>
<gene>
    <name type="primary">prfB</name>
    <name type="ordered locus">HI_1212</name>
</gene>